<proteinExistence type="inferred from homology"/>
<sequence>MKIAVVGAGKWGSALYDALSVKNECAITSFHEKDLSYFVSTKEALGYEYLVFALYAQGIHEWLVNNFKDLNQKILVASKGIDCKSLKFMDEVFGEFISSDRLCFLSGPSFASEVLEKKPCALVISGKNQNLCSKFASFFPNYIKTYTSLDVKGAEICGAYKNVLAIASGVCDGLNLGNNARASLVSRGLVEMHRFGQFFNAKEETFLGLSGAGDLFLTASSNLSRNYRVGSSLASGKNIKDVLIELGEVAEGVQTAYAIHALSKQFQIYTPIVNEVVLMLEGKNAWESLKDLMSSKEEIS</sequence>
<accession>B9KD88</accession>
<keyword id="KW-0963">Cytoplasm</keyword>
<keyword id="KW-0444">Lipid biosynthesis</keyword>
<keyword id="KW-0443">Lipid metabolism</keyword>
<keyword id="KW-0520">NAD</keyword>
<keyword id="KW-0521">NADP</keyword>
<keyword id="KW-0547">Nucleotide-binding</keyword>
<keyword id="KW-0560">Oxidoreductase</keyword>
<keyword id="KW-0594">Phospholipid biosynthesis</keyword>
<keyword id="KW-1208">Phospholipid metabolism</keyword>
<keyword id="KW-1185">Reference proteome</keyword>
<gene>
    <name evidence="1" type="primary">gpsA</name>
    <name type="ordered locus">Cla_1206</name>
</gene>
<organism>
    <name type="scientific">Campylobacter lari (strain RM2100 / D67 / ATCC BAA-1060)</name>
    <dbReference type="NCBI Taxonomy" id="306263"/>
    <lineage>
        <taxon>Bacteria</taxon>
        <taxon>Pseudomonadati</taxon>
        <taxon>Campylobacterota</taxon>
        <taxon>Epsilonproteobacteria</taxon>
        <taxon>Campylobacterales</taxon>
        <taxon>Campylobacteraceae</taxon>
        <taxon>Campylobacter</taxon>
    </lineage>
</organism>
<feature type="chain" id="PRO_1000190126" description="Glycerol-3-phosphate dehydrogenase [NAD(P)+]">
    <location>
        <begin position="1"/>
        <end position="300"/>
    </location>
</feature>
<feature type="active site" description="Proton acceptor" evidence="1">
    <location>
        <position position="161"/>
    </location>
</feature>
<feature type="binding site" evidence="1">
    <location>
        <position position="11"/>
    </location>
    <ligand>
        <name>NADPH</name>
        <dbReference type="ChEBI" id="CHEBI:57783"/>
    </ligand>
</feature>
<feature type="binding site" evidence="1">
    <location>
        <position position="33"/>
    </location>
    <ligand>
        <name>NADPH</name>
        <dbReference type="ChEBI" id="CHEBI:57783"/>
    </ligand>
</feature>
<feature type="binding site" evidence="1">
    <location>
        <position position="79"/>
    </location>
    <ligand>
        <name>NADPH</name>
        <dbReference type="ChEBI" id="CHEBI:57783"/>
    </ligand>
</feature>
<feature type="binding site" evidence="1">
    <location>
        <position position="79"/>
    </location>
    <ligand>
        <name>sn-glycerol 3-phosphate</name>
        <dbReference type="ChEBI" id="CHEBI:57597"/>
    </ligand>
</feature>
<feature type="binding site" evidence="1">
    <location>
        <position position="107"/>
    </location>
    <ligand>
        <name>sn-glycerol 3-phosphate</name>
        <dbReference type="ChEBI" id="CHEBI:57597"/>
    </ligand>
</feature>
<feature type="binding site" evidence="1">
    <location>
        <position position="109"/>
    </location>
    <ligand>
        <name>sn-glycerol 3-phosphate</name>
        <dbReference type="ChEBI" id="CHEBI:57597"/>
    </ligand>
</feature>
<feature type="binding site" evidence="1">
    <location>
        <position position="111"/>
    </location>
    <ligand>
        <name>NADPH</name>
        <dbReference type="ChEBI" id="CHEBI:57783"/>
    </ligand>
</feature>
<feature type="binding site" evidence="1">
    <location>
        <position position="161"/>
    </location>
    <ligand>
        <name>sn-glycerol 3-phosphate</name>
        <dbReference type="ChEBI" id="CHEBI:57597"/>
    </ligand>
</feature>
<feature type="binding site" evidence="1">
    <location>
        <position position="214"/>
    </location>
    <ligand>
        <name>sn-glycerol 3-phosphate</name>
        <dbReference type="ChEBI" id="CHEBI:57597"/>
    </ligand>
</feature>
<feature type="binding site" evidence="1">
    <location>
        <position position="224"/>
    </location>
    <ligand>
        <name>sn-glycerol 3-phosphate</name>
        <dbReference type="ChEBI" id="CHEBI:57597"/>
    </ligand>
</feature>
<feature type="binding site" evidence="1">
    <location>
        <position position="225"/>
    </location>
    <ligand>
        <name>NADPH</name>
        <dbReference type="ChEBI" id="CHEBI:57783"/>
    </ligand>
</feature>
<feature type="binding site" evidence="1">
    <location>
        <position position="225"/>
    </location>
    <ligand>
        <name>sn-glycerol 3-phosphate</name>
        <dbReference type="ChEBI" id="CHEBI:57597"/>
    </ligand>
</feature>
<feature type="binding site" evidence="1">
    <location>
        <position position="226"/>
    </location>
    <ligand>
        <name>sn-glycerol 3-phosphate</name>
        <dbReference type="ChEBI" id="CHEBI:57597"/>
    </ligand>
</feature>
<feature type="binding site" evidence="1">
    <location>
        <position position="249"/>
    </location>
    <ligand>
        <name>NADPH</name>
        <dbReference type="ChEBI" id="CHEBI:57783"/>
    </ligand>
</feature>
<feature type="binding site" evidence="1">
    <location>
        <position position="251"/>
    </location>
    <ligand>
        <name>NADPH</name>
        <dbReference type="ChEBI" id="CHEBI:57783"/>
    </ligand>
</feature>
<reference key="1">
    <citation type="journal article" date="2008" name="Foodborne Pathog. Dis.">
        <title>The complete genome sequence and analysis of the human pathogen Campylobacter lari.</title>
        <authorList>
            <person name="Miller W.G."/>
            <person name="Wang G."/>
            <person name="Binnewies T.T."/>
            <person name="Parker C.T."/>
        </authorList>
    </citation>
    <scope>NUCLEOTIDE SEQUENCE [LARGE SCALE GENOMIC DNA]</scope>
    <source>
        <strain>RM2100 / D67 / ATCC BAA-1060</strain>
    </source>
</reference>
<evidence type="ECO:0000255" key="1">
    <source>
        <dbReference type="HAMAP-Rule" id="MF_00394"/>
    </source>
</evidence>
<comment type="function">
    <text evidence="1">Catalyzes the reduction of the glycolytic intermediate dihydroxyacetone phosphate (DHAP) to sn-glycerol 3-phosphate (G3P), the key precursor for phospholipid synthesis.</text>
</comment>
<comment type="catalytic activity">
    <reaction evidence="1">
        <text>sn-glycerol 3-phosphate + NAD(+) = dihydroxyacetone phosphate + NADH + H(+)</text>
        <dbReference type="Rhea" id="RHEA:11092"/>
        <dbReference type="ChEBI" id="CHEBI:15378"/>
        <dbReference type="ChEBI" id="CHEBI:57540"/>
        <dbReference type="ChEBI" id="CHEBI:57597"/>
        <dbReference type="ChEBI" id="CHEBI:57642"/>
        <dbReference type="ChEBI" id="CHEBI:57945"/>
        <dbReference type="EC" id="1.1.1.94"/>
    </reaction>
    <physiologicalReaction direction="right-to-left" evidence="1">
        <dbReference type="Rhea" id="RHEA:11094"/>
    </physiologicalReaction>
</comment>
<comment type="catalytic activity">
    <reaction evidence="1">
        <text>sn-glycerol 3-phosphate + NADP(+) = dihydroxyacetone phosphate + NADPH + H(+)</text>
        <dbReference type="Rhea" id="RHEA:11096"/>
        <dbReference type="ChEBI" id="CHEBI:15378"/>
        <dbReference type="ChEBI" id="CHEBI:57597"/>
        <dbReference type="ChEBI" id="CHEBI:57642"/>
        <dbReference type="ChEBI" id="CHEBI:57783"/>
        <dbReference type="ChEBI" id="CHEBI:58349"/>
        <dbReference type="EC" id="1.1.1.94"/>
    </reaction>
    <physiologicalReaction direction="right-to-left" evidence="1">
        <dbReference type="Rhea" id="RHEA:11098"/>
    </physiologicalReaction>
</comment>
<comment type="pathway">
    <text evidence="1">Membrane lipid metabolism; glycerophospholipid metabolism.</text>
</comment>
<comment type="subcellular location">
    <subcellularLocation>
        <location evidence="1">Cytoplasm</location>
    </subcellularLocation>
</comment>
<comment type="similarity">
    <text evidence="1">Belongs to the NAD-dependent glycerol-3-phosphate dehydrogenase family.</text>
</comment>
<name>GPDA_CAMLR</name>
<protein>
    <recommendedName>
        <fullName evidence="1">Glycerol-3-phosphate dehydrogenase [NAD(P)+]</fullName>
        <ecNumber evidence="1">1.1.1.94</ecNumber>
    </recommendedName>
    <alternativeName>
        <fullName evidence="1">NAD(P)(+)-dependent glycerol-3-phosphate dehydrogenase</fullName>
    </alternativeName>
    <alternativeName>
        <fullName evidence="1">NAD(P)H-dependent dihydroxyacetone-phosphate reductase</fullName>
    </alternativeName>
</protein>
<dbReference type="EC" id="1.1.1.94" evidence="1"/>
<dbReference type="EMBL" id="CP000932">
    <property type="protein sequence ID" value="ACM64527.1"/>
    <property type="molecule type" value="Genomic_DNA"/>
</dbReference>
<dbReference type="RefSeq" id="WP_012661910.1">
    <property type="nucleotide sequence ID" value="NC_012039.1"/>
</dbReference>
<dbReference type="SMR" id="B9KD88"/>
<dbReference type="STRING" id="306263.Cla_1206"/>
<dbReference type="KEGG" id="cla:CLA_1206"/>
<dbReference type="PATRIC" id="fig|306263.5.peg.1194"/>
<dbReference type="eggNOG" id="COG0240">
    <property type="taxonomic scope" value="Bacteria"/>
</dbReference>
<dbReference type="HOGENOM" id="CLU_033449_0_2_7"/>
<dbReference type="UniPathway" id="UPA00940"/>
<dbReference type="Proteomes" id="UP000007727">
    <property type="component" value="Chromosome"/>
</dbReference>
<dbReference type="GO" id="GO:0005829">
    <property type="term" value="C:cytosol"/>
    <property type="evidence" value="ECO:0007669"/>
    <property type="project" value="TreeGrafter"/>
</dbReference>
<dbReference type="GO" id="GO:0047952">
    <property type="term" value="F:glycerol-3-phosphate dehydrogenase [NAD(P)+] activity"/>
    <property type="evidence" value="ECO:0007669"/>
    <property type="project" value="UniProtKB-UniRule"/>
</dbReference>
<dbReference type="GO" id="GO:0051287">
    <property type="term" value="F:NAD binding"/>
    <property type="evidence" value="ECO:0007669"/>
    <property type="project" value="InterPro"/>
</dbReference>
<dbReference type="GO" id="GO:0005975">
    <property type="term" value="P:carbohydrate metabolic process"/>
    <property type="evidence" value="ECO:0007669"/>
    <property type="project" value="InterPro"/>
</dbReference>
<dbReference type="GO" id="GO:0046167">
    <property type="term" value="P:glycerol-3-phosphate biosynthetic process"/>
    <property type="evidence" value="ECO:0007669"/>
    <property type="project" value="UniProtKB-UniRule"/>
</dbReference>
<dbReference type="GO" id="GO:0046168">
    <property type="term" value="P:glycerol-3-phosphate catabolic process"/>
    <property type="evidence" value="ECO:0007669"/>
    <property type="project" value="InterPro"/>
</dbReference>
<dbReference type="GO" id="GO:0006650">
    <property type="term" value="P:glycerophospholipid metabolic process"/>
    <property type="evidence" value="ECO:0007669"/>
    <property type="project" value="UniProtKB-UniRule"/>
</dbReference>
<dbReference type="GO" id="GO:0008654">
    <property type="term" value="P:phospholipid biosynthetic process"/>
    <property type="evidence" value="ECO:0007669"/>
    <property type="project" value="UniProtKB-KW"/>
</dbReference>
<dbReference type="FunFam" id="1.10.1040.10:FF:000025">
    <property type="entry name" value="Glycerol-3-phosphate dehydrogenase [NAD(P)+]"/>
    <property type="match status" value="1"/>
</dbReference>
<dbReference type="Gene3D" id="1.10.1040.10">
    <property type="entry name" value="N-(1-d-carboxylethyl)-l-norvaline Dehydrogenase, domain 2"/>
    <property type="match status" value="1"/>
</dbReference>
<dbReference type="Gene3D" id="3.40.50.720">
    <property type="entry name" value="NAD(P)-binding Rossmann-like Domain"/>
    <property type="match status" value="1"/>
</dbReference>
<dbReference type="HAMAP" id="MF_00394">
    <property type="entry name" value="NAD_Glyc3P_dehydrog"/>
    <property type="match status" value="1"/>
</dbReference>
<dbReference type="InterPro" id="IPR008927">
    <property type="entry name" value="6-PGluconate_DH-like_C_sf"/>
</dbReference>
<dbReference type="InterPro" id="IPR013328">
    <property type="entry name" value="6PGD_dom2"/>
</dbReference>
<dbReference type="InterPro" id="IPR006168">
    <property type="entry name" value="G3P_DH_NAD-dep"/>
</dbReference>
<dbReference type="InterPro" id="IPR006109">
    <property type="entry name" value="G3P_DH_NAD-dep_C"/>
</dbReference>
<dbReference type="InterPro" id="IPR011128">
    <property type="entry name" value="G3P_DH_NAD-dep_N"/>
</dbReference>
<dbReference type="InterPro" id="IPR036291">
    <property type="entry name" value="NAD(P)-bd_dom_sf"/>
</dbReference>
<dbReference type="NCBIfam" id="NF000940">
    <property type="entry name" value="PRK00094.1-2"/>
    <property type="match status" value="1"/>
</dbReference>
<dbReference type="NCBIfam" id="NF000943">
    <property type="entry name" value="PRK00094.2-1"/>
    <property type="match status" value="1"/>
</dbReference>
<dbReference type="PANTHER" id="PTHR11728">
    <property type="entry name" value="GLYCEROL-3-PHOSPHATE DEHYDROGENASE"/>
    <property type="match status" value="1"/>
</dbReference>
<dbReference type="PANTHER" id="PTHR11728:SF1">
    <property type="entry name" value="GLYCEROL-3-PHOSPHATE DEHYDROGENASE [NAD(+)] 2, CHLOROPLASTIC"/>
    <property type="match status" value="1"/>
</dbReference>
<dbReference type="Pfam" id="PF07479">
    <property type="entry name" value="NAD_Gly3P_dh_C"/>
    <property type="match status" value="1"/>
</dbReference>
<dbReference type="Pfam" id="PF01210">
    <property type="entry name" value="NAD_Gly3P_dh_N"/>
    <property type="match status" value="1"/>
</dbReference>
<dbReference type="PIRSF" id="PIRSF000114">
    <property type="entry name" value="Glycerol-3-P_dh"/>
    <property type="match status" value="1"/>
</dbReference>
<dbReference type="PRINTS" id="PR00077">
    <property type="entry name" value="GPDHDRGNASE"/>
</dbReference>
<dbReference type="SUPFAM" id="SSF48179">
    <property type="entry name" value="6-phosphogluconate dehydrogenase C-terminal domain-like"/>
    <property type="match status" value="1"/>
</dbReference>
<dbReference type="SUPFAM" id="SSF51735">
    <property type="entry name" value="NAD(P)-binding Rossmann-fold domains"/>
    <property type="match status" value="1"/>
</dbReference>
<dbReference type="PROSITE" id="PS00957">
    <property type="entry name" value="NAD_G3PDH"/>
    <property type="match status" value="1"/>
</dbReference>